<reference key="1">
    <citation type="submission" date="2007-11" db="EMBL/GenBank/DDBJ databases">
        <title>Complete sequence of chromosome of Shewanella baltica OS195.</title>
        <authorList>
            <consortium name="US DOE Joint Genome Institute"/>
            <person name="Copeland A."/>
            <person name="Lucas S."/>
            <person name="Lapidus A."/>
            <person name="Barry K."/>
            <person name="Glavina del Rio T."/>
            <person name="Dalin E."/>
            <person name="Tice H."/>
            <person name="Pitluck S."/>
            <person name="Chain P."/>
            <person name="Malfatti S."/>
            <person name="Shin M."/>
            <person name="Vergez L."/>
            <person name="Schmutz J."/>
            <person name="Larimer F."/>
            <person name="Land M."/>
            <person name="Hauser L."/>
            <person name="Kyrpides N."/>
            <person name="Kim E."/>
            <person name="Brettar I."/>
            <person name="Rodrigues J."/>
            <person name="Konstantinidis K."/>
            <person name="Klappenbach J."/>
            <person name="Hofle M."/>
            <person name="Tiedje J."/>
            <person name="Richardson P."/>
        </authorList>
    </citation>
    <scope>NUCLEOTIDE SEQUENCE [LARGE SCALE GENOMIC DNA]</scope>
    <source>
        <strain>OS195</strain>
    </source>
</reference>
<gene>
    <name evidence="2" type="primary">trmB</name>
    <name type="ordered locus">Sbal195_3195</name>
</gene>
<evidence type="ECO:0000250" key="1"/>
<evidence type="ECO:0000255" key="2">
    <source>
        <dbReference type="HAMAP-Rule" id="MF_01057"/>
    </source>
</evidence>
<feature type="chain" id="PRO_1000084449" description="tRNA (guanine-N(7)-)-methyltransferase">
    <location>
        <begin position="1"/>
        <end position="238"/>
    </location>
</feature>
<feature type="active site" evidence="1">
    <location>
        <position position="143"/>
    </location>
</feature>
<feature type="binding site" evidence="2">
    <location>
        <position position="68"/>
    </location>
    <ligand>
        <name>S-adenosyl-L-methionine</name>
        <dbReference type="ChEBI" id="CHEBI:59789"/>
    </ligand>
</feature>
<feature type="binding site" evidence="2">
    <location>
        <position position="93"/>
    </location>
    <ligand>
        <name>S-adenosyl-L-methionine</name>
        <dbReference type="ChEBI" id="CHEBI:59789"/>
    </ligand>
</feature>
<feature type="binding site" evidence="2">
    <location>
        <position position="120"/>
    </location>
    <ligand>
        <name>S-adenosyl-L-methionine</name>
        <dbReference type="ChEBI" id="CHEBI:59789"/>
    </ligand>
</feature>
<feature type="binding site" evidence="2">
    <location>
        <position position="143"/>
    </location>
    <ligand>
        <name>S-adenosyl-L-methionine</name>
        <dbReference type="ChEBI" id="CHEBI:59789"/>
    </ligand>
</feature>
<feature type="binding site" evidence="2">
    <location>
        <position position="147"/>
    </location>
    <ligand>
        <name>substrate</name>
    </ligand>
</feature>
<feature type="binding site" evidence="2">
    <location>
        <position position="179"/>
    </location>
    <ligand>
        <name>substrate</name>
    </ligand>
</feature>
<feature type="binding site" evidence="2">
    <location>
        <begin position="216"/>
        <end position="219"/>
    </location>
    <ligand>
        <name>substrate</name>
    </ligand>
</feature>
<keyword id="KW-0489">Methyltransferase</keyword>
<keyword id="KW-0949">S-adenosyl-L-methionine</keyword>
<keyword id="KW-0808">Transferase</keyword>
<keyword id="KW-0819">tRNA processing</keyword>
<proteinExistence type="inferred from homology"/>
<organism>
    <name type="scientific">Shewanella baltica (strain OS195)</name>
    <dbReference type="NCBI Taxonomy" id="399599"/>
    <lineage>
        <taxon>Bacteria</taxon>
        <taxon>Pseudomonadati</taxon>
        <taxon>Pseudomonadota</taxon>
        <taxon>Gammaproteobacteria</taxon>
        <taxon>Alteromonadales</taxon>
        <taxon>Shewanellaceae</taxon>
        <taxon>Shewanella</taxon>
    </lineage>
</organism>
<name>TRMB_SHEB9</name>
<comment type="function">
    <text evidence="2">Catalyzes the formation of N(7)-methylguanine at position 46 (m7G46) in tRNA.</text>
</comment>
<comment type="catalytic activity">
    <reaction evidence="2">
        <text>guanosine(46) in tRNA + S-adenosyl-L-methionine = N(7)-methylguanosine(46) in tRNA + S-adenosyl-L-homocysteine</text>
        <dbReference type="Rhea" id="RHEA:42708"/>
        <dbReference type="Rhea" id="RHEA-COMP:10188"/>
        <dbReference type="Rhea" id="RHEA-COMP:10189"/>
        <dbReference type="ChEBI" id="CHEBI:57856"/>
        <dbReference type="ChEBI" id="CHEBI:59789"/>
        <dbReference type="ChEBI" id="CHEBI:74269"/>
        <dbReference type="ChEBI" id="CHEBI:74480"/>
        <dbReference type="EC" id="2.1.1.33"/>
    </reaction>
</comment>
<comment type="pathway">
    <text evidence="2">tRNA modification; N(7)-methylguanine-tRNA biosynthesis.</text>
</comment>
<comment type="similarity">
    <text evidence="2">Belongs to the class I-like SAM-binding methyltransferase superfamily. TrmB family.</text>
</comment>
<sequence>MSEVTTAEFNEEGKYLRKIRSFVLREGRLTKGQAQAIESQWPTMGLDYSPTPLVLSDVFGREADTVLEIGFGMGASLVQMAKDAPAQNFIGIEVHKPGVGSCLSDAAIAGVTNLRVYHHDAMEVLEHAIADGSLARVQLFFPDPWHKKRHHKRRIVQAEFAELIRRKLKIGGVFHIATDWEEYSEHMLEVMQAAPGYKNQSSDGTVVPRPDHRPLTKFEARGHRLGHGVWDLMFERIA</sequence>
<protein>
    <recommendedName>
        <fullName evidence="2">tRNA (guanine-N(7)-)-methyltransferase</fullName>
        <ecNumber evidence="2">2.1.1.33</ecNumber>
    </recommendedName>
    <alternativeName>
        <fullName evidence="2">tRNA (guanine(46)-N(7))-methyltransferase</fullName>
    </alternativeName>
    <alternativeName>
        <fullName evidence="2">tRNA(m7G46)-methyltransferase</fullName>
    </alternativeName>
</protein>
<dbReference type="EC" id="2.1.1.33" evidence="2"/>
<dbReference type="EMBL" id="CP000891">
    <property type="protein sequence ID" value="ABX50357.1"/>
    <property type="molecule type" value="Genomic_DNA"/>
</dbReference>
<dbReference type="RefSeq" id="WP_012197409.1">
    <property type="nucleotide sequence ID" value="NC_009997.1"/>
</dbReference>
<dbReference type="SMR" id="A9KXQ5"/>
<dbReference type="GeneID" id="11773246"/>
<dbReference type="KEGG" id="sbn:Sbal195_3195"/>
<dbReference type="HOGENOM" id="CLU_050910_0_1_6"/>
<dbReference type="UniPathway" id="UPA00989"/>
<dbReference type="Proteomes" id="UP000000770">
    <property type="component" value="Chromosome"/>
</dbReference>
<dbReference type="GO" id="GO:0043527">
    <property type="term" value="C:tRNA methyltransferase complex"/>
    <property type="evidence" value="ECO:0007669"/>
    <property type="project" value="TreeGrafter"/>
</dbReference>
<dbReference type="GO" id="GO:0008176">
    <property type="term" value="F:tRNA (guanine(46)-N7)-methyltransferase activity"/>
    <property type="evidence" value="ECO:0007669"/>
    <property type="project" value="UniProtKB-UniRule"/>
</dbReference>
<dbReference type="CDD" id="cd02440">
    <property type="entry name" value="AdoMet_MTases"/>
    <property type="match status" value="1"/>
</dbReference>
<dbReference type="FunFam" id="3.40.50.150:FF:000024">
    <property type="entry name" value="tRNA (guanine-N(7)-)-methyltransferase"/>
    <property type="match status" value="1"/>
</dbReference>
<dbReference type="Gene3D" id="3.40.50.150">
    <property type="entry name" value="Vaccinia Virus protein VP39"/>
    <property type="match status" value="1"/>
</dbReference>
<dbReference type="HAMAP" id="MF_01057">
    <property type="entry name" value="tRNA_methyltr_TrmB"/>
    <property type="match status" value="1"/>
</dbReference>
<dbReference type="InterPro" id="IPR029063">
    <property type="entry name" value="SAM-dependent_MTases_sf"/>
</dbReference>
<dbReference type="InterPro" id="IPR003358">
    <property type="entry name" value="tRNA_(Gua-N-7)_MeTrfase_Trmb"/>
</dbReference>
<dbReference type="InterPro" id="IPR055361">
    <property type="entry name" value="tRNA_methyltr_TrmB_bact"/>
</dbReference>
<dbReference type="NCBIfam" id="TIGR00091">
    <property type="entry name" value="tRNA (guanosine(46)-N7)-methyltransferase TrmB"/>
    <property type="match status" value="1"/>
</dbReference>
<dbReference type="PANTHER" id="PTHR23417">
    <property type="entry name" value="3-DEOXY-D-MANNO-OCTULOSONIC-ACID TRANSFERASE/TRNA GUANINE-N 7 - -METHYLTRANSFERASE"/>
    <property type="match status" value="1"/>
</dbReference>
<dbReference type="PANTHER" id="PTHR23417:SF14">
    <property type="entry name" value="PENTACOTRIPEPTIDE-REPEAT REGION OF PRORP DOMAIN-CONTAINING PROTEIN"/>
    <property type="match status" value="1"/>
</dbReference>
<dbReference type="Pfam" id="PF02390">
    <property type="entry name" value="Methyltransf_4"/>
    <property type="match status" value="1"/>
</dbReference>
<dbReference type="SUPFAM" id="SSF53335">
    <property type="entry name" value="S-adenosyl-L-methionine-dependent methyltransferases"/>
    <property type="match status" value="1"/>
</dbReference>
<dbReference type="PROSITE" id="PS51625">
    <property type="entry name" value="SAM_MT_TRMB"/>
    <property type="match status" value="1"/>
</dbReference>
<accession>A9KXQ5</accession>